<evidence type="ECO:0000250" key="1"/>
<evidence type="ECO:0000250" key="2">
    <source>
        <dbReference type="UniProtKB" id="Q8R0N6"/>
    </source>
</evidence>
<evidence type="ECO:0000255" key="3"/>
<evidence type="ECO:0000269" key="4">
    <source>
    </source>
</evidence>
<evidence type="ECO:0000269" key="5">
    <source>
    </source>
</evidence>
<evidence type="ECO:0000269" key="6">
    <source>
    </source>
</evidence>
<evidence type="ECO:0000269" key="7">
    <source>
    </source>
</evidence>
<evidence type="ECO:0000269" key="8">
    <source>
    </source>
</evidence>
<evidence type="ECO:0000303" key="9">
    <source>
    </source>
</evidence>
<evidence type="ECO:0000303" key="10">
    <source>
    </source>
</evidence>
<evidence type="ECO:0000303" key="11">
    <source>
    </source>
</evidence>
<evidence type="ECO:0000305" key="12"/>
<dbReference type="EC" id="1.1.99.24" evidence="7"/>
<dbReference type="EMBL" id="AY033237">
    <property type="protein sequence ID" value="AAK44223.1"/>
    <property type="molecule type" value="mRNA"/>
</dbReference>
<dbReference type="EMBL" id="AK056992">
    <property type="protein sequence ID" value="BAB71335.1"/>
    <property type="molecule type" value="mRNA"/>
</dbReference>
<dbReference type="EMBL" id="AK300243">
    <property type="protein sequence ID" value="BAG62010.1"/>
    <property type="molecule type" value="mRNA"/>
</dbReference>
<dbReference type="EMBL" id="CH471068">
    <property type="protein sequence ID" value="EAW86902.1"/>
    <property type="molecule type" value="Genomic_DNA"/>
</dbReference>
<dbReference type="EMBL" id="CH471068">
    <property type="protein sequence ID" value="EAW86903.1"/>
    <property type="molecule type" value="Genomic_DNA"/>
</dbReference>
<dbReference type="EMBL" id="CH471068">
    <property type="protein sequence ID" value="EAW86907.1"/>
    <property type="molecule type" value="Genomic_DNA"/>
</dbReference>
<dbReference type="EMBL" id="BC064634">
    <property type="protein sequence ID" value="AAH64634.1"/>
    <property type="molecule type" value="mRNA"/>
</dbReference>
<dbReference type="EMBL" id="AB075879">
    <property type="protein sequence ID" value="BAD38661.1"/>
    <property type="molecule type" value="mRNA"/>
</dbReference>
<dbReference type="CCDS" id="CCDS6190.2">
    <molecule id="Q8IWW8-1"/>
</dbReference>
<dbReference type="RefSeq" id="NP_653251.2">
    <molecule id="Q8IWW8-1"/>
    <property type="nucleotide sequence ID" value="NM_144650.3"/>
</dbReference>
<dbReference type="SMR" id="Q8IWW8"/>
<dbReference type="BioGRID" id="126489">
    <property type="interactions" value="3"/>
</dbReference>
<dbReference type="FunCoup" id="Q8IWW8">
    <property type="interactions" value="570"/>
</dbReference>
<dbReference type="IntAct" id="Q8IWW8">
    <property type="interactions" value="4"/>
</dbReference>
<dbReference type="STRING" id="9606.ENSP00000379865"/>
<dbReference type="ChEMBL" id="CHEMBL4947"/>
<dbReference type="DrugBank" id="DB09072">
    <property type="generic name" value="Sodium oxybate"/>
</dbReference>
<dbReference type="iPTMnet" id="Q8IWW8"/>
<dbReference type="PhosphoSitePlus" id="Q8IWW8"/>
<dbReference type="SwissPalm" id="Q8IWW8"/>
<dbReference type="BioMuta" id="ADHFE1"/>
<dbReference type="DMDM" id="74714449"/>
<dbReference type="MassIVE" id="Q8IWW8"/>
<dbReference type="PaxDb" id="9606-ENSP00000379865"/>
<dbReference type="PeptideAtlas" id="Q8IWW8"/>
<dbReference type="ProteomicsDB" id="70916">
    <molecule id="Q8IWW8-1"/>
</dbReference>
<dbReference type="ProteomicsDB" id="70917">
    <molecule id="Q8IWW8-2"/>
</dbReference>
<dbReference type="ProteomicsDB" id="70918">
    <molecule id="Q8IWW8-3"/>
</dbReference>
<dbReference type="ProteomicsDB" id="70919">
    <molecule id="Q8IWW8-4"/>
</dbReference>
<dbReference type="Antibodypedia" id="11986">
    <property type="antibodies" value="118 antibodies from 23 providers"/>
</dbReference>
<dbReference type="DNASU" id="137872"/>
<dbReference type="Ensembl" id="ENST00000396623.8">
    <molecule id="Q8IWW8-1"/>
    <property type="protein sequence ID" value="ENSP00000379865.3"/>
    <property type="gene ID" value="ENSG00000147576.17"/>
</dbReference>
<dbReference type="Ensembl" id="ENST00000415254.5">
    <molecule id="Q8IWW8-2"/>
    <property type="protein sequence ID" value="ENSP00000407115.1"/>
    <property type="gene ID" value="ENSG00000147576.17"/>
</dbReference>
<dbReference type="Ensembl" id="ENST00000424777.6">
    <molecule id="Q8IWW8-3"/>
    <property type="protein sequence ID" value="ENSP00000410883.2"/>
    <property type="gene ID" value="ENSG00000147576.17"/>
</dbReference>
<dbReference type="GeneID" id="137872"/>
<dbReference type="KEGG" id="hsa:137872"/>
<dbReference type="MANE-Select" id="ENST00000396623.8">
    <property type="protein sequence ID" value="ENSP00000379865.3"/>
    <property type="RefSeq nucleotide sequence ID" value="NM_144650.3"/>
    <property type="RefSeq protein sequence ID" value="NP_653251.2"/>
</dbReference>
<dbReference type="UCSC" id="uc003xwb.5">
    <molecule id="Q8IWW8-1"/>
    <property type="organism name" value="human"/>
</dbReference>
<dbReference type="AGR" id="HGNC:16354"/>
<dbReference type="CTD" id="137872"/>
<dbReference type="DisGeNET" id="137872"/>
<dbReference type="GeneCards" id="ADHFE1"/>
<dbReference type="HGNC" id="HGNC:16354">
    <property type="gene designation" value="ADHFE1"/>
</dbReference>
<dbReference type="HPA" id="ENSG00000147576">
    <property type="expression patterns" value="Tissue enhanced (liver, skeletal muscle, tongue)"/>
</dbReference>
<dbReference type="MIM" id="611083">
    <property type="type" value="gene"/>
</dbReference>
<dbReference type="neXtProt" id="NX_Q8IWW8"/>
<dbReference type="OpenTargets" id="ENSG00000147576"/>
<dbReference type="PharmGKB" id="PA134871493"/>
<dbReference type="VEuPathDB" id="HostDB:ENSG00000147576"/>
<dbReference type="eggNOG" id="KOG3857">
    <property type="taxonomic scope" value="Eukaryota"/>
</dbReference>
<dbReference type="GeneTree" id="ENSGT00390000003849"/>
<dbReference type="HOGENOM" id="CLU_007207_0_7_1"/>
<dbReference type="InParanoid" id="Q8IWW8"/>
<dbReference type="OMA" id="NLMGAGC"/>
<dbReference type="OrthoDB" id="339764at2759"/>
<dbReference type="PAN-GO" id="Q8IWW8">
    <property type="GO annotations" value="2 GO annotations based on evolutionary models"/>
</dbReference>
<dbReference type="PhylomeDB" id="Q8IWW8"/>
<dbReference type="TreeFam" id="TF105710"/>
<dbReference type="BRENDA" id="1.1.99.24">
    <property type="organism ID" value="2681"/>
</dbReference>
<dbReference type="PathwayCommons" id="Q8IWW8"/>
<dbReference type="Reactome" id="R-HSA-880009">
    <property type="pathway name" value="Interconversion of 2-oxoglutarate and 2-hydroxyglutarate"/>
</dbReference>
<dbReference type="SignaLink" id="Q8IWW8"/>
<dbReference type="BioGRID-ORCS" id="137872">
    <property type="hits" value="24 hits in 1147 CRISPR screens"/>
</dbReference>
<dbReference type="GenomeRNAi" id="137872"/>
<dbReference type="Pharos" id="Q8IWW8">
    <property type="development level" value="Tbio"/>
</dbReference>
<dbReference type="PRO" id="PR:Q8IWW8"/>
<dbReference type="Proteomes" id="UP000005640">
    <property type="component" value="Chromosome 8"/>
</dbReference>
<dbReference type="RNAct" id="Q8IWW8">
    <property type="molecule type" value="protein"/>
</dbReference>
<dbReference type="Bgee" id="ENSG00000147576">
    <property type="expression patterns" value="Expressed in right lobe of liver and 171 other cell types or tissues"/>
</dbReference>
<dbReference type="ExpressionAtlas" id="Q8IWW8">
    <property type="expression patterns" value="baseline and differential"/>
</dbReference>
<dbReference type="GO" id="GO:0005759">
    <property type="term" value="C:mitochondrial matrix"/>
    <property type="evidence" value="ECO:0000304"/>
    <property type="project" value="Reactome"/>
</dbReference>
<dbReference type="GO" id="GO:0005739">
    <property type="term" value="C:mitochondrion"/>
    <property type="evidence" value="ECO:0006056"/>
    <property type="project" value="FlyBase"/>
</dbReference>
<dbReference type="GO" id="GO:0004022">
    <property type="term" value="F:alcohol dehydrogenase (NAD+) activity"/>
    <property type="evidence" value="ECO:0000318"/>
    <property type="project" value="GO_Central"/>
</dbReference>
<dbReference type="GO" id="GO:0047988">
    <property type="term" value="F:hydroxyacid-oxoacid transhydrogenase activity"/>
    <property type="evidence" value="ECO:0000314"/>
    <property type="project" value="UniProtKB"/>
</dbReference>
<dbReference type="GO" id="GO:0046872">
    <property type="term" value="F:metal ion binding"/>
    <property type="evidence" value="ECO:0007669"/>
    <property type="project" value="InterPro"/>
</dbReference>
<dbReference type="GO" id="GO:0006103">
    <property type="term" value="P:2-oxoglutarate metabolic process"/>
    <property type="evidence" value="ECO:0000304"/>
    <property type="project" value="Reactome"/>
</dbReference>
<dbReference type="GO" id="GO:0019552">
    <property type="term" value="P:glutamate catabolic process via 2-hydroxyglutarate"/>
    <property type="evidence" value="ECO:0000314"/>
    <property type="project" value="UniProtKB"/>
</dbReference>
<dbReference type="GO" id="GO:0006629">
    <property type="term" value="P:lipid metabolic process"/>
    <property type="evidence" value="ECO:0007669"/>
    <property type="project" value="UniProtKB-KW"/>
</dbReference>
<dbReference type="CDD" id="cd08190">
    <property type="entry name" value="HOT"/>
    <property type="match status" value="1"/>
</dbReference>
<dbReference type="FunFam" id="1.20.1090.10:FF:000003">
    <property type="entry name" value="Probable hydroxyacid-oxoacid transhydrogenase, mitochondrial"/>
    <property type="match status" value="1"/>
</dbReference>
<dbReference type="FunFam" id="3.40.50.1970:FF:000010">
    <property type="entry name" value="Probable hydroxyacid-oxoacid transhydrogenase, mitochondrial"/>
    <property type="match status" value="1"/>
</dbReference>
<dbReference type="Gene3D" id="3.40.50.1970">
    <property type="match status" value="1"/>
</dbReference>
<dbReference type="Gene3D" id="1.20.1090.10">
    <property type="entry name" value="Dehydroquinate synthase-like - alpha domain"/>
    <property type="match status" value="1"/>
</dbReference>
<dbReference type="InterPro" id="IPR001670">
    <property type="entry name" value="ADH_Fe/GldA"/>
</dbReference>
<dbReference type="InterPro" id="IPR056798">
    <property type="entry name" value="ADH_Fe_C"/>
</dbReference>
<dbReference type="InterPro" id="IPR039697">
    <property type="entry name" value="Alcohol_dehydrogenase_Fe"/>
</dbReference>
<dbReference type="InterPro" id="IPR042157">
    <property type="entry name" value="HOT"/>
</dbReference>
<dbReference type="PANTHER" id="PTHR11496">
    <property type="entry name" value="ALCOHOL DEHYDROGENASE"/>
    <property type="match status" value="1"/>
</dbReference>
<dbReference type="PANTHER" id="PTHR11496:SF83">
    <property type="entry name" value="HYDROXYACID-OXOACID TRANSHYDROGENASE, MITOCHONDRIAL"/>
    <property type="match status" value="1"/>
</dbReference>
<dbReference type="Pfam" id="PF25137">
    <property type="entry name" value="ADH_Fe_C"/>
    <property type="match status" value="1"/>
</dbReference>
<dbReference type="Pfam" id="PF00465">
    <property type="entry name" value="Fe-ADH"/>
    <property type="match status" value="1"/>
</dbReference>
<dbReference type="SUPFAM" id="SSF56796">
    <property type="entry name" value="Dehydroquinate synthase-like"/>
    <property type="match status" value="1"/>
</dbReference>
<sequence length="467" mass="50308">MAAAARARVAYLLRQLQRAACQCPTHSHTYSQAPGLSPSGKTTDYAFEMAVSNIRYGAAVTKEVGMDLKNMGAKNVCLMTDKNLSKLPPVQVAMDSLVKNGIPFTVYDNVRVEPTDSSFMEAIEFAQKGAFDAYVAVGGGSTMDTCKAANLYASSPHSDFLDYVSAPIGKGKPVSVPLKPLIAVPTTSGTGSETTGVAIFDYEHLKVKIGITSRAIKPTLGLIDPLHTLHMPARVVANSGFDVLCHALESYTTLPYHLRSPCPSNPITRPAYQGSNPISDIWAIHALRIVAKYLKRAVRNPDDLEARSHMHLASAFAGIGFGNAGVHLCHGMSYPISGLVKMYKAKDYNVDHPLVPHGLSVVLTSPAVFTFTAQMFPERHLEMAEILGADTRTARIQDAGLVLADTLRKFLFDLDVDDGLAAVGYSKADIPALVKGTLPQERVTKLAPCPQSEEDLAALFEASMKLY</sequence>
<comment type="function">
    <text evidence="7">Catalyzes the cofactor-independent reversible oxidation of gamma-hydroxybutyrate (GHB) to succinic semialdehyde (SSA) coupled to reduction of 2-ketoglutarate (2-KG) to D-2-hydroxyglutarate (D-2-HG). D,L-3-hydroxyisobutyrate and L-3-hydroxybutyrate (L-3-OHB) are also substrates for HOT with 10-fold lower activities.</text>
</comment>
<comment type="catalytic activity">
    <reaction evidence="7">
        <text>(S)-3-hydroxybutanoate + 2-oxoglutarate = (R)-2-hydroxyglutarate + acetoacetate</text>
        <dbReference type="Rhea" id="RHEA:23048"/>
        <dbReference type="ChEBI" id="CHEBI:11047"/>
        <dbReference type="ChEBI" id="CHEBI:13705"/>
        <dbReference type="ChEBI" id="CHEBI:15801"/>
        <dbReference type="ChEBI" id="CHEBI:16810"/>
        <dbReference type="EC" id="1.1.99.24"/>
    </reaction>
</comment>
<comment type="catalytic activity">
    <reaction evidence="7">
        <text>4-hydroxybutanoate + 2-oxoglutarate = (R)-2-hydroxyglutarate + succinate semialdehyde</text>
        <dbReference type="Rhea" id="RHEA:24734"/>
        <dbReference type="ChEBI" id="CHEBI:15801"/>
        <dbReference type="ChEBI" id="CHEBI:16724"/>
        <dbReference type="ChEBI" id="CHEBI:16810"/>
        <dbReference type="ChEBI" id="CHEBI:57706"/>
        <dbReference type="EC" id="1.1.99.24"/>
    </reaction>
</comment>
<comment type="biophysicochemical properties">
    <kinetics>
        <KM evidence="7">0.17 mM for GHB</KM>
        <KM evidence="7">1.2 mM for 2-KG</KM>
        <KM evidence="7">0.12 mM for D-2-HG</KM>
        <KM evidence="7">0.04 mM for SSA</KM>
        <KM evidence="7">0.8 mM for L-3-OHB</KM>
        <Vmax evidence="7">16.0 nmol/h/mg enzyme with GHB and 2-KG as substrates</Vmax>
        <Vmax evidence="7">0.5 nmol/h/mg enzyme with SSA and D-2-HG as substrates</Vmax>
        <Vmax evidence="7">1.8 nmol/h/mg enzyme with L-3-OHB and 2-KG as substrates</Vmax>
    </kinetics>
    <phDependence>
        <text evidence="7">Optimum pH is 7.5.</text>
    </phDependence>
</comment>
<comment type="subcellular location">
    <subcellularLocation>
        <location evidence="1">Mitochondrion</location>
    </subcellularLocation>
</comment>
<comment type="alternative products">
    <event type="alternative splicing"/>
    <isoform>
        <id>Q8IWW8-1</id>
        <name>1</name>
        <sequence type="displayed"/>
    </isoform>
    <isoform>
        <id>Q8IWW8-2</id>
        <name>2</name>
        <sequence type="described" ref="VSP_031984"/>
    </isoform>
    <isoform>
        <id>Q8IWW8-3</id>
        <name>3</name>
        <sequence type="described" ref="VSP_031985 VSP_031986"/>
    </isoform>
    <isoform>
        <id>Q8IWW8-4</id>
        <name>4</name>
        <sequence type="described" ref="VSP_031984 VSP_031985 VSP_031986"/>
    </isoform>
</comment>
<comment type="tissue specificity">
    <text evidence="4">Only expressed in adult liver.</text>
</comment>
<comment type="similarity">
    <text evidence="12">Belongs to the iron-containing alcohol dehydrogenase family. Hydroxyacid-oxoacid transhydrogenase subfamily.</text>
</comment>
<accession>Q8IWW8</accession>
<accession>B4DTJ8</accession>
<accession>Q49A19</accession>
<accession>Q68CI7</accession>
<accession>Q6P2B6</accession>
<accession>Q96MF9</accession>
<name>HOT_HUMAN</name>
<keyword id="KW-0007">Acetylation</keyword>
<keyword id="KW-0025">Alternative splicing</keyword>
<keyword id="KW-0443">Lipid metabolism</keyword>
<keyword id="KW-0496">Mitochondrion</keyword>
<keyword id="KW-0560">Oxidoreductase</keyword>
<keyword id="KW-0597">Phosphoprotein</keyword>
<keyword id="KW-1267">Proteomics identification</keyword>
<keyword id="KW-1185">Reference proteome</keyword>
<keyword id="KW-0809">Transit peptide</keyword>
<feature type="transit peptide" description="Mitochondrion" evidence="3">
    <location>
        <begin position="1"/>
        <end status="unknown"/>
    </location>
</feature>
<feature type="chain" id="PRO_0000322996" description="Hydroxyacid-oxoacid transhydrogenase, mitochondrial">
    <location>
        <begin status="unknown"/>
        <end position="467"/>
    </location>
</feature>
<feature type="modified residue" description="N6-acetyllysine" evidence="2">
    <location>
        <position position="445"/>
    </location>
</feature>
<feature type="modified residue" description="Phosphoserine" evidence="2">
    <location>
        <position position="452"/>
    </location>
</feature>
<feature type="splice variant" id="VSP_031984" description="In isoform 2 and isoform 4." evidence="9 10 11">
    <location>
        <begin position="1"/>
        <end position="48"/>
    </location>
</feature>
<feature type="splice variant" id="VSP_031985" description="In isoform 3 and isoform 4." evidence="10 11">
    <original>RNPDD</original>
    <variation>NSTDK</variation>
    <location>
        <begin position="299"/>
        <end position="303"/>
    </location>
</feature>
<feature type="splice variant" id="VSP_031986" description="In isoform 3 and isoform 4." evidence="10 11">
    <location>
        <begin position="304"/>
        <end position="467"/>
    </location>
</feature>
<feature type="sequence variant" id="VAR_039470" description="In a breast cancer sample; somatic mutation." evidence="8">
    <original>D</original>
    <variation>V</variation>
    <location>
        <position position="242"/>
    </location>
</feature>
<feature type="sequence variant" id="VAR_054015" description="In dbSNP:rs1060242." evidence="5 6">
    <original>C</original>
    <variation>R</variation>
    <location>
        <position position="449"/>
    </location>
</feature>
<reference key="1">
    <citation type="journal article" date="2002" name="DNA Seq.">
        <title>Cloning and characterization of a novel human alcohol dehydrogenase gene (ADHFe1).</title>
        <authorList>
            <person name="Deng Y."/>
            <person name="Wang Z."/>
            <person name="Gu S."/>
            <person name="Ji C."/>
            <person name="Ying K."/>
            <person name="Xie Y."/>
            <person name="Mao Y."/>
        </authorList>
    </citation>
    <scope>NUCLEOTIDE SEQUENCE [MRNA] (ISOFORMS 1 AND 2)</scope>
    <scope>TISSUE SPECIFICITY</scope>
    <source>
        <tissue>Fetal brain</tissue>
    </source>
</reference>
<reference key="2">
    <citation type="journal article" date="2004" name="Nat. Genet.">
        <title>Complete sequencing and characterization of 21,243 full-length human cDNAs.</title>
        <authorList>
            <person name="Ota T."/>
            <person name="Suzuki Y."/>
            <person name="Nishikawa T."/>
            <person name="Otsuki T."/>
            <person name="Sugiyama T."/>
            <person name="Irie R."/>
            <person name="Wakamatsu A."/>
            <person name="Hayashi K."/>
            <person name="Sato H."/>
            <person name="Nagai K."/>
            <person name="Kimura K."/>
            <person name="Makita H."/>
            <person name="Sekine M."/>
            <person name="Obayashi M."/>
            <person name="Nishi T."/>
            <person name="Shibahara T."/>
            <person name="Tanaka T."/>
            <person name="Ishii S."/>
            <person name="Yamamoto J."/>
            <person name="Saito K."/>
            <person name="Kawai Y."/>
            <person name="Isono Y."/>
            <person name="Nakamura Y."/>
            <person name="Nagahari K."/>
            <person name="Murakami K."/>
            <person name="Yasuda T."/>
            <person name="Iwayanagi T."/>
            <person name="Wagatsuma M."/>
            <person name="Shiratori A."/>
            <person name="Sudo H."/>
            <person name="Hosoiri T."/>
            <person name="Kaku Y."/>
            <person name="Kodaira H."/>
            <person name="Kondo H."/>
            <person name="Sugawara M."/>
            <person name="Takahashi M."/>
            <person name="Kanda K."/>
            <person name="Yokoi T."/>
            <person name="Furuya T."/>
            <person name="Kikkawa E."/>
            <person name="Omura Y."/>
            <person name="Abe K."/>
            <person name="Kamihara K."/>
            <person name="Katsuta N."/>
            <person name="Sato K."/>
            <person name="Tanikawa M."/>
            <person name="Yamazaki M."/>
            <person name="Ninomiya K."/>
            <person name="Ishibashi T."/>
            <person name="Yamashita H."/>
            <person name="Murakawa K."/>
            <person name="Fujimori K."/>
            <person name="Tanai H."/>
            <person name="Kimata M."/>
            <person name="Watanabe M."/>
            <person name="Hiraoka S."/>
            <person name="Chiba Y."/>
            <person name="Ishida S."/>
            <person name="Ono Y."/>
            <person name="Takiguchi S."/>
            <person name="Watanabe S."/>
            <person name="Yosida M."/>
            <person name="Hotuta T."/>
            <person name="Kusano J."/>
            <person name="Kanehori K."/>
            <person name="Takahashi-Fujii A."/>
            <person name="Hara H."/>
            <person name="Tanase T.-O."/>
            <person name="Nomura Y."/>
            <person name="Togiya S."/>
            <person name="Komai F."/>
            <person name="Hara R."/>
            <person name="Takeuchi K."/>
            <person name="Arita M."/>
            <person name="Imose N."/>
            <person name="Musashino K."/>
            <person name="Yuuki H."/>
            <person name="Oshima A."/>
            <person name="Sasaki N."/>
            <person name="Aotsuka S."/>
            <person name="Yoshikawa Y."/>
            <person name="Matsunawa H."/>
            <person name="Ichihara T."/>
            <person name="Shiohata N."/>
            <person name="Sano S."/>
            <person name="Moriya S."/>
            <person name="Momiyama H."/>
            <person name="Satoh N."/>
            <person name="Takami S."/>
            <person name="Terashima Y."/>
            <person name="Suzuki O."/>
            <person name="Nakagawa S."/>
            <person name="Senoh A."/>
            <person name="Mizoguchi H."/>
            <person name="Goto Y."/>
            <person name="Shimizu F."/>
            <person name="Wakebe H."/>
            <person name="Hishigaki H."/>
            <person name="Watanabe T."/>
            <person name="Sugiyama A."/>
            <person name="Takemoto M."/>
            <person name="Kawakami B."/>
            <person name="Yamazaki M."/>
            <person name="Watanabe K."/>
            <person name="Kumagai A."/>
            <person name="Itakura S."/>
            <person name="Fukuzumi Y."/>
            <person name="Fujimori Y."/>
            <person name="Komiyama M."/>
            <person name="Tashiro H."/>
            <person name="Tanigami A."/>
            <person name="Fujiwara T."/>
            <person name="Ono T."/>
            <person name="Yamada K."/>
            <person name="Fujii Y."/>
            <person name="Ozaki K."/>
            <person name="Hirao M."/>
            <person name="Ohmori Y."/>
            <person name="Kawabata A."/>
            <person name="Hikiji T."/>
            <person name="Kobatake N."/>
            <person name="Inagaki H."/>
            <person name="Ikema Y."/>
            <person name="Okamoto S."/>
            <person name="Okitani R."/>
            <person name="Kawakami T."/>
            <person name="Noguchi S."/>
            <person name="Itoh T."/>
            <person name="Shigeta K."/>
            <person name="Senba T."/>
            <person name="Matsumura K."/>
            <person name="Nakajima Y."/>
            <person name="Mizuno T."/>
            <person name="Morinaga M."/>
            <person name="Sasaki M."/>
            <person name="Togashi T."/>
            <person name="Oyama M."/>
            <person name="Hata H."/>
            <person name="Watanabe M."/>
            <person name="Komatsu T."/>
            <person name="Mizushima-Sugano J."/>
            <person name="Satoh T."/>
            <person name="Shirai Y."/>
            <person name="Takahashi Y."/>
            <person name="Nakagawa K."/>
            <person name="Okumura K."/>
            <person name="Nagase T."/>
            <person name="Nomura N."/>
            <person name="Kikuchi H."/>
            <person name="Masuho Y."/>
            <person name="Yamashita R."/>
            <person name="Nakai K."/>
            <person name="Yada T."/>
            <person name="Nakamura Y."/>
            <person name="Ohara O."/>
            <person name="Isogai T."/>
            <person name="Sugano S."/>
        </authorList>
    </citation>
    <scope>NUCLEOTIDE SEQUENCE [LARGE SCALE MRNA] (ISOFORMS 2 AND 3)</scope>
    <scope>VARIANT ARG-449</scope>
    <source>
        <tissue>Placenta</tissue>
        <tissue>Skeletal muscle</tissue>
    </source>
</reference>
<reference key="3">
    <citation type="submission" date="2005-07" db="EMBL/GenBank/DDBJ databases">
        <authorList>
            <person name="Mural R.J."/>
            <person name="Istrail S."/>
            <person name="Sutton G.G."/>
            <person name="Florea L."/>
            <person name="Halpern A.L."/>
            <person name="Mobarry C.M."/>
            <person name="Lippert R."/>
            <person name="Walenz B."/>
            <person name="Shatkay H."/>
            <person name="Dew I."/>
            <person name="Miller J.R."/>
            <person name="Flanigan M.J."/>
            <person name="Edwards N.J."/>
            <person name="Bolanos R."/>
            <person name="Fasulo D."/>
            <person name="Halldorsson B.V."/>
            <person name="Hannenhalli S."/>
            <person name="Turner R."/>
            <person name="Yooseph S."/>
            <person name="Lu F."/>
            <person name="Nusskern D.R."/>
            <person name="Shue B.C."/>
            <person name="Zheng X.H."/>
            <person name="Zhong F."/>
            <person name="Delcher A.L."/>
            <person name="Huson D.H."/>
            <person name="Kravitz S.A."/>
            <person name="Mouchard L."/>
            <person name="Reinert K."/>
            <person name="Remington K.A."/>
            <person name="Clark A.G."/>
            <person name="Waterman M.S."/>
            <person name="Eichler E.E."/>
            <person name="Adams M.D."/>
            <person name="Hunkapiller M.W."/>
            <person name="Myers E.W."/>
            <person name="Venter J.C."/>
        </authorList>
    </citation>
    <scope>NUCLEOTIDE SEQUENCE [LARGE SCALE GENOMIC DNA]</scope>
</reference>
<reference key="4">
    <citation type="journal article" date="2004" name="Genome Res.">
        <title>The status, quality, and expansion of the NIH full-length cDNA project: the Mammalian Gene Collection (MGC).</title>
        <authorList>
            <consortium name="The MGC Project Team"/>
        </authorList>
    </citation>
    <scope>NUCLEOTIDE SEQUENCE [LARGE SCALE MRNA] (ISOFORM 4)</scope>
    <source>
        <tissue>Pancreas</tissue>
    </source>
</reference>
<reference key="5">
    <citation type="journal article" date="2004" name="Oncogene">
        <title>Expression profiling and differential screening between hepatoblastomas and the corresponding normal livers: identification of high expression of the PLK1 oncogene as a poor-prognostic indicator of hepatoblastomas.</title>
        <authorList>
            <person name="Yamada S."/>
            <person name="Ohira M."/>
            <person name="Horie H."/>
            <person name="Ando K."/>
            <person name="Takayasu H."/>
            <person name="Suzuki Y."/>
            <person name="Sugano S."/>
            <person name="Hirata T."/>
            <person name="Goto T."/>
            <person name="Matsunaga T."/>
            <person name="Hiyama E."/>
            <person name="Hayashi Y."/>
            <person name="Ando H."/>
            <person name="Suita S."/>
            <person name="Kaneko M."/>
            <person name="Sasaki F."/>
            <person name="Hashizume K."/>
            <person name="Ohnuma N."/>
            <person name="Nakagawara A."/>
        </authorList>
    </citation>
    <scope>NUCLEOTIDE SEQUENCE [LARGE SCALE MRNA] OF 415-467</scope>
    <scope>VARIANT ARG-449</scope>
    <source>
        <tissue>Hepatoblastoma</tissue>
    </source>
</reference>
<reference key="6">
    <citation type="journal article" date="2005" name="J. Inherit. Metab. Dis.">
        <title>Kinetic characterization of human hydroxyacid-oxoacid transhydrogenase: relevance to D-2-hydroxyglutaric and gamma-hydroxybutyric acidurias.</title>
        <authorList>
            <person name="Struys E.A."/>
            <person name="Verhoeven N.M."/>
            <person name="Ten Brink H.J."/>
            <person name="Wickenhagen W.V."/>
            <person name="Gibson K.M."/>
            <person name="Jakobs C."/>
        </authorList>
    </citation>
    <scope>FUNCTION</scope>
    <scope>SUBSTRATE SPECIFICITY</scope>
    <scope>CATALYTIC ACTIVITY</scope>
    <scope>BIOPHYSICOCHEMICAL PROPERTIES</scope>
</reference>
<reference key="7">
    <citation type="journal article" date="2014" name="J. Proteomics">
        <title>An enzyme assisted RP-RPLC approach for in-depth analysis of human liver phosphoproteome.</title>
        <authorList>
            <person name="Bian Y."/>
            <person name="Song C."/>
            <person name="Cheng K."/>
            <person name="Dong M."/>
            <person name="Wang F."/>
            <person name="Huang J."/>
            <person name="Sun D."/>
            <person name="Wang L."/>
            <person name="Ye M."/>
            <person name="Zou H."/>
        </authorList>
    </citation>
    <scope>IDENTIFICATION BY MASS SPECTROMETRY [LARGE SCALE ANALYSIS]</scope>
    <source>
        <tissue>Liver</tissue>
    </source>
</reference>
<reference key="8">
    <citation type="journal article" date="2006" name="Science">
        <title>The consensus coding sequences of human breast and colorectal cancers.</title>
        <authorList>
            <person name="Sjoeblom T."/>
            <person name="Jones S."/>
            <person name="Wood L.D."/>
            <person name="Parsons D.W."/>
            <person name="Lin J."/>
            <person name="Barber T.D."/>
            <person name="Mandelker D."/>
            <person name="Leary R.J."/>
            <person name="Ptak J."/>
            <person name="Silliman N."/>
            <person name="Szabo S."/>
            <person name="Buckhaults P."/>
            <person name="Farrell C."/>
            <person name="Meeh P."/>
            <person name="Markowitz S.D."/>
            <person name="Willis J."/>
            <person name="Dawson D."/>
            <person name="Willson J.K.V."/>
            <person name="Gazdar A.F."/>
            <person name="Hartigan J."/>
            <person name="Wu L."/>
            <person name="Liu C."/>
            <person name="Parmigiani G."/>
            <person name="Park B.H."/>
            <person name="Bachman K.E."/>
            <person name="Papadopoulos N."/>
            <person name="Vogelstein B."/>
            <person name="Kinzler K.W."/>
            <person name="Velculescu V.E."/>
        </authorList>
    </citation>
    <scope>VARIANT [LARGE SCALE ANALYSIS] VAL-242</scope>
</reference>
<protein>
    <recommendedName>
        <fullName>Hydroxyacid-oxoacid transhydrogenase, mitochondrial</fullName>
        <shortName>HOT</shortName>
        <ecNumber evidence="7">1.1.99.24</ecNumber>
    </recommendedName>
    <alternativeName>
        <fullName>Alcohol dehydrogenase iron-containing protein 1</fullName>
        <shortName>ADHFe1</shortName>
    </alternativeName>
    <alternativeName>
        <fullName>Fe-containing alcohol dehydrogenase</fullName>
    </alternativeName>
</protein>
<gene>
    <name type="primary">ADHFE1</name>
    <name type="ORF">HMFT2263</name>
</gene>
<organism>
    <name type="scientific">Homo sapiens</name>
    <name type="common">Human</name>
    <dbReference type="NCBI Taxonomy" id="9606"/>
    <lineage>
        <taxon>Eukaryota</taxon>
        <taxon>Metazoa</taxon>
        <taxon>Chordata</taxon>
        <taxon>Craniata</taxon>
        <taxon>Vertebrata</taxon>
        <taxon>Euteleostomi</taxon>
        <taxon>Mammalia</taxon>
        <taxon>Eutheria</taxon>
        <taxon>Euarchontoglires</taxon>
        <taxon>Primates</taxon>
        <taxon>Haplorrhini</taxon>
        <taxon>Catarrhini</taxon>
        <taxon>Hominidae</taxon>
        <taxon>Homo</taxon>
    </lineage>
</organism>
<proteinExistence type="evidence at protein level"/>